<protein>
    <recommendedName>
        <fullName>Protein KleF</fullName>
    </recommendedName>
    <alternativeName>
        <fullName>KcrB4 protein</fullName>
    </alternativeName>
</protein>
<evidence type="ECO:0000305" key="1"/>
<feature type="chain" id="PRO_0000024485" description="Protein KleF">
    <location>
        <begin position="1"/>
        <end position="104"/>
    </location>
</feature>
<feature type="splice variant" id="VSP_018861" description="In isoform Short." evidence="1">
    <location>
        <position position="48"/>
    </location>
</feature>
<feature type="sequence conflict" description="In Ref. 2; AAA73871." evidence="1" ref="2">
    <original>RQE</original>
    <variation>TPGVSWLSVNDLSPNFSG</variation>
    <location>
        <begin position="102"/>
        <end position="104"/>
    </location>
</feature>
<gene>
    <name type="primary">kleF</name>
    <name type="synonym">kcrB4</name>
</gene>
<proteinExistence type="predicted"/>
<comment type="alternative products">
    <event type="alternative initiation"/>
    <isoform>
        <id>Q52772-1</id>
        <name>Long</name>
        <sequence type="displayed"/>
    </isoform>
    <isoform>
        <id>Q52772-2</id>
        <name>Short</name>
        <name>Small</name>
        <sequence type="described" ref="VSP_018861"/>
    </isoform>
</comment>
<sequence length="104" mass="11313">MPRQEPKQPGYVCPTTGRVAVLVKDYADSDLNGDASAYWFNPEAEGWGMDPWKLVEGVDPHTQGCSMDVCFADGSSKTVGPLMTFFLSAKDAARLAALKGQRQE</sequence>
<geneLocation type="plasmid">
    <name>IncP-alpha RK2</name>
</geneLocation>
<keyword id="KW-0024">Alternative initiation</keyword>
<keyword id="KW-0614">Plasmid</keyword>
<name>KLEF2_ECOLX</name>
<dbReference type="EMBL" id="L18919">
    <property type="protein sequence ID" value="AAA92771.1"/>
    <property type="molecule type" value="Genomic_DNA"/>
</dbReference>
<dbReference type="EMBL" id="L18919">
    <property type="protein sequence ID" value="AAA92772.1"/>
    <property type="molecule type" value="Genomic_DNA"/>
</dbReference>
<dbReference type="EMBL" id="L13287">
    <property type="protein sequence ID" value="AAA73871.1"/>
    <property type="molecule type" value="Genomic_DNA"/>
</dbReference>
<dbReference type="RefSeq" id="WP_011205834.1">
    <property type="nucleotide sequence ID" value="NZ_VMTS01000048.1"/>
</dbReference>
<dbReference type="InterPro" id="IPR024249">
    <property type="entry name" value="DUF2761"/>
</dbReference>
<dbReference type="Pfam" id="PF10959">
    <property type="entry name" value="DUF2761"/>
    <property type="match status" value="1"/>
</dbReference>
<reference key="1">
    <citation type="journal article" date="1993" name="J. Bacteriol.">
        <title>kil-kor regulon of promiscuous plasmid RK2: structure, products, and regulation of two operons that constitute the kilE locus.</title>
        <authorList>
            <person name="Kornacki J.A."/>
            <person name="Chang C.-H."/>
            <person name="Figurski D.H."/>
        </authorList>
    </citation>
    <scope>NUCLEOTIDE SEQUENCE [GENOMIC DNA]</scope>
</reference>
<reference key="2">
    <citation type="journal article" date="1995" name="Microbiology">
        <title>Evolution of the korA-oriV segment of promiscuous IncP plasmids.</title>
        <authorList>
            <person name="Thomas C.M."/>
            <person name="Smith C.A."/>
            <person name="Ibbotson J.P."/>
            <person name="Johnston L."/>
            <person name="Wang N."/>
        </authorList>
    </citation>
    <scope>NUCLEOTIDE SEQUENCE [GENOMIC DNA]</scope>
</reference>
<organism>
    <name type="scientific">Escherichia coli</name>
    <dbReference type="NCBI Taxonomy" id="562"/>
    <lineage>
        <taxon>Bacteria</taxon>
        <taxon>Pseudomonadati</taxon>
        <taxon>Pseudomonadota</taxon>
        <taxon>Gammaproteobacteria</taxon>
        <taxon>Enterobacterales</taxon>
        <taxon>Enterobacteriaceae</taxon>
        <taxon>Escherichia</taxon>
    </lineage>
</organism>
<accession>Q52772</accession>
<accession>Q47325</accession>
<accession>Q52773</accession>